<comment type="function">
    <text evidence="2">Required for pre-mRNA splicing. Represses the splicing of MAPT/Tau exon 10. May function as export adapter involved in mRNA nuclear export such as of histone H2A. Binds mRNA which is thought to be transferred to the NXF1-NXT1 heterodimer for export (TAP/NXF1 pathway); enhances NXF1-NXT1 RNA-binding activity. RNA-binding is semi-sequence specific (By similarity).</text>
</comment>
<comment type="subunit">
    <text evidence="2 6">Found in large molecular weight complexes containing CCNL1 and the p110 isoforms of either CDC2L1 or CDC2L2 (By similarity). Interacts with CCNL2 and CPSF6. Interacts with NXF1 (By similarity). Interacts with YTHDC1 (PubMed:29799838).</text>
</comment>
<comment type="interaction">
    <interactant intactId="EBI-913123">
        <id>Q8BL97</id>
    </interactant>
    <interactant intactId="EBI-913075">
        <id>Q6PFR5</id>
        <label>Tra2a</label>
    </interactant>
    <organismsDiffer>false</organismsDiffer>
    <experiments>4</experiments>
</comment>
<comment type="subcellular location">
    <subcellularLocation>
        <location evidence="2">Nucleus</location>
    </subcellularLocation>
    <subcellularLocation>
        <location evidence="2">Cytoplasm</location>
    </subcellularLocation>
</comment>
<comment type="alternative products">
    <event type="alternative splicing"/>
    <isoform>
        <id>Q8BL97-1</id>
        <name>1</name>
        <sequence type="displayed"/>
    </isoform>
    <isoform>
        <id>Q8BL97-2</id>
        <name>2</name>
        <sequence type="described" ref="VSP_013654"/>
    </isoform>
    <isoform>
        <id>Q8BL97-3</id>
        <name>3</name>
        <sequence type="described" ref="VSP_013654 VSP_013655 VSP_013656"/>
    </isoform>
    <isoform>
        <id>Q8BL97-4</id>
        <name>4</name>
        <sequence type="described" ref="VSP_013654 VSP_013657"/>
    </isoform>
    <text>Isoforms, lacking all or part of the RS domain, may be involved in modulating Srsf7 function.</text>
</comment>
<comment type="PTM">
    <text evidence="9">Extensively phosphorylated on serine residues in the RS domain.</text>
</comment>
<comment type="similarity">
    <text evidence="9">Belongs to the splicing factor SR family.</text>
</comment>
<proteinExistence type="evidence at protein level"/>
<accession>Q8BL97</accession>
<accession>Q8BMC6</accession>
<accession>Q8BUR2</accession>
<accession>Q8R2N4</accession>
<accession>Q8R3E9</accession>
<accession>Q91YS1</accession>
<keyword id="KW-0007">Acetylation</keyword>
<keyword id="KW-0025">Alternative splicing</keyword>
<keyword id="KW-0963">Cytoplasm</keyword>
<keyword id="KW-1017">Isopeptide bond</keyword>
<keyword id="KW-0479">Metal-binding</keyword>
<keyword id="KW-0507">mRNA processing</keyword>
<keyword id="KW-0508">mRNA splicing</keyword>
<keyword id="KW-0509">mRNA transport</keyword>
<keyword id="KW-0539">Nucleus</keyword>
<keyword id="KW-0597">Phosphoprotein</keyword>
<keyword id="KW-1185">Reference proteome</keyword>
<keyword id="KW-0677">Repeat</keyword>
<keyword id="KW-0678">Repressor</keyword>
<keyword id="KW-0694">RNA-binding</keyword>
<keyword id="KW-0813">Transport</keyword>
<keyword id="KW-0832">Ubl conjugation</keyword>
<keyword id="KW-0862">Zinc</keyword>
<keyword id="KW-0863">Zinc-finger</keyword>
<dbReference type="EMBL" id="AK032861">
    <property type="protein sequence ID" value="BAC28058.1"/>
    <property type="molecule type" value="mRNA"/>
</dbReference>
<dbReference type="EMBL" id="AK045884">
    <property type="protein sequence ID" value="BAC32521.1"/>
    <property type="molecule type" value="mRNA"/>
</dbReference>
<dbReference type="EMBL" id="AK082848">
    <property type="protein sequence ID" value="BAC38650.1"/>
    <property type="molecule type" value="mRNA"/>
</dbReference>
<dbReference type="EMBL" id="BC014857">
    <property type="protein sequence ID" value="AAH14857.1"/>
    <property type="molecule type" value="mRNA"/>
</dbReference>
<dbReference type="EMBL" id="BC025529">
    <property type="protein sequence ID" value="AAH25529.1"/>
    <property type="molecule type" value="mRNA"/>
</dbReference>
<dbReference type="EMBL" id="BC027391">
    <property type="protein sequence ID" value="AAH27391.1"/>
    <property type="molecule type" value="mRNA"/>
</dbReference>
<dbReference type="CCDS" id="CCDS28988.1">
    <molecule id="Q8BL97-2"/>
</dbReference>
<dbReference type="RefSeq" id="NP_001182414.1">
    <property type="nucleotide sequence ID" value="NM_001195485.1"/>
</dbReference>
<dbReference type="RefSeq" id="NP_001182415.1">
    <property type="nucleotide sequence ID" value="NM_001195486.1"/>
</dbReference>
<dbReference type="RefSeq" id="NP_001182416.1">
    <property type="nucleotide sequence ID" value="NM_001195487.1"/>
</dbReference>
<dbReference type="RefSeq" id="NP_001347364.1">
    <molecule id="Q8BL97-4"/>
    <property type="nucleotide sequence ID" value="NM_001360435.1"/>
</dbReference>
<dbReference type="RefSeq" id="NP_666195.1">
    <molecule id="Q8BL97-2"/>
    <property type="nucleotide sequence ID" value="NM_146083.2"/>
</dbReference>
<dbReference type="RefSeq" id="XP_006524253.1">
    <property type="nucleotide sequence ID" value="XM_006524190.2"/>
</dbReference>
<dbReference type="BMRB" id="Q8BL97"/>
<dbReference type="SMR" id="Q8BL97"/>
<dbReference type="BioGRID" id="230352">
    <property type="interactions" value="27"/>
</dbReference>
<dbReference type="DIP" id="DIP-36580N"/>
<dbReference type="FunCoup" id="Q8BL97">
    <property type="interactions" value="2992"/>
</dbReference>
<dbReference type="IntAct" id="Q8BL97">
    <property type="interactions" value="7"/>
</dbReference>
<dbReference type="MINT" id="Q8BL97"/>
<dbReference type="STRING" id="10090.ENSMUSP00000070983"/>
<dbReference type="iPTMnet" id="Q8BL97"/>
<dbReference type="PhosphoSitePlus" id="Q8BL97"/>
<dbReference type="SwissPalm" id="Q8BL97"/>
<dbReference type="jPOST" id="Q8BL97"/>
<dbReference type="PaxDb" id="10090-ENSMUSP00000070983"/>
<dbReference type="PeptideAtlas" id="Q8BL97"/>
<dbReference type="ProteomicsDB" id="258617">
    <molecule id="Q8BL97-1"/>
</dbReference>
<dbReference type="ProteomicsDB" id="258618">
    <molecule id="Q8BL97-2"/>
</dbReference>
<dbReference type="ProteomicsDB" id="258619">
    <molecule id="Q8BL97-3"/>
</dbReference>
<dbReference type="ProteomicsDB" id="258620">
    <molecule id="Q8BL97-4"/>
</dbReference>
<dbReference type="Pumba" id="Q8BL97"/>
<dbReference type="Antibodypedia" id="29517">
    <property type="antibodies" value="262 antibodies from 32 providers"/>
</dbReference>
<dbReference type="DNASU" id="225027"/>
<dbReference type="Ensembl" id="ENSMUST00000063417.11">
    <molecule id="Q8BL97-2"/>
    <property type="protein sequence ID" value="ENSMUSP00000070983.10"/>
    <property type="gene ID" value="ENSMUSG00000024097.12"/>
</dbReference>
<dbReference type="GeneID" id="225027"/>
<dbReference type="KEGG" id="mmu:225027"/>
<dbReference type="UCSC" id="uc008dqp.1">
    <molecule id="Q8BL97-1"/>
    <property type="organism name" value="mouse"/>
</dbReference>
<dbReference type="UCSC" id="uc008dqt.2">
    <molecule id="Q8BL97-4"/>
    <property type="organism name" value="mouse"/>
</dbReference>
<dbReference type="AGR" id="MGI:1926232"/>
<dbReference type="CTD" id="6432"/>
<dbReference type="MGI" id="MGI:1926232">
    <property type="gene designation" value="Srsf7"/>
</dbReference>
<dbReference type="VEuPathDB" id="HostDB:ENSMUSG00000024097"/>
<dbReference type="eggNOG" id="KOG0107">
    <property type="taxonomic scope" value="Eukaryota"/>
</dbReference>
<dbReference type="GeneTree" id="ENSGT00910000144115"/>
<dbReference type="HOGENOM" id="CLU_012062_20_0_1"/>
<dbReference type="InParanoid" id="Q8BL97"/>
<dbReference type="OMA" id="HGPLNCK"/>
<dbReference type="OrthoDB" id="5970at2759"/>
<dbReference type="TreeFam" id="TF351858"/>
<dbReference type="Reactome" id="R-MMU-159236">
    <property type="pathway name" value="Transport of Mature mRNA derived from an Intron-Containing Transcript"/>
</dbReference>
<dbReference type="Reactome" id="R-MMU-72163">
    <property type="pathway name" value="mRNA Splicing - Major Pathway"/>
</dbReference>
<dbReference type="Reactome" id="R-MMU-72165">
    <property type="pathway name" value="mRNA Splicing - Minor Pathway"/>
</dbReference>
<dbReference type="Reactome" id="R-MMU-72187">
    <property type="pathway name" value="mRNA 3'-end processing"/>
</dbReference>
<dbReference type="Reactome" id="R-MMU-72203">
    <property type="pathway name" value="Processing of Capped Intron-Containing Pre-mRNA"/>
</dbReference>
<dbReference type="Reactome" id="R-MMU-73856">
    <property type="pathway name" value="RNA Polymerase II Transcription Termination"/>
</dbReference>
<dbReference type="BioGRID-ORCS" id="225027">
    <property type="hits" value="29 hits in 78 CRISPR screens"/>
</dbReference>
<dbReference type="ChiTaRS" id="Srsf7">
    <property type="organism name" value="mouse"/>
</dbReference>
<dbReference type="PRO" id="PR:Q8BL97"/>
<dbReference type="Proteomes" id="UP000000589">
    <property type="component" value="Chromosome 17"/>
</dbReference>
<dbReference type="RNAct" id="Q8BL97">
    <property type="molecule type" value="protein"/>
</dbReference>
<dbReference type="Bgee" id="ENSMUSG00000024097">
    <property type="expression patterns" value="Expressed in ureteric bud tip and 252 other cell types or tissues"/>
</dbReference>
<dbReference type="ExpressionAtlas" id="Q8BL97">
    <property type="expression patterns" value="baseline and differential"/>
</dbReference>
<dbReference type="GO" id="GO:0005737">
    <property type="term" value="C:cytoplasm"/>
    <property type="evidence" value="ECO:0007669"/>
    <property type="project" value="UniProtKB-SubCell"/>
</dbReference>
<dbReference type="GO" id="GO:0005654">
    <property type="term" value="C:nucleoplasm"/>
    <property type="evidence" value="ECO:0007669"/>
    <property type="project" value="Ensembl"/>
</dbReference>
<dbReference type="GO" id="GO:0019904">
    <property type="term" value="F:protein domain specific binding"/>
    <property type="evidence" value="ECO:0007669"/>
    <property type="project" value="Ensembl"/>
</dbReference>
<dbReference type="GO" id="GO:0003723">
    <property type="term" value="F:RNA binding"/>
    <property type="evidence" value="ECO:0007669"/>
    <property type="project" value="UniProtKB-KW"/>
</dbReference>
<dbReference type="GO" id="GO:0008270">
    <property type="term" value="F:zinc ion binding"/>
    <property type="evidence" value="ECO:0007669"/>
    <property type="project" value="UniProtKB-KW"/>
</dbReference>
<dbReference type="GO" id="GO:1990830">
    <property type="term" value="P:cellular response to leukemia inhibitory factor"/>
    <property type="evidence" value="ECO:0000270"/>
    <property type="project" value="MGI"/>
</dbReference>
<dbReference type="GO" id="GO:0006397">
    <property type="term" value="P:mRNA processing"/>
    <property type="evidence" value="ECO:0007669"/>
    <property type="project" value="UniProtKB-KW"/>
</dbReference>
<dbReference type="GO" id="GO:0051028">
    <property type="term" value="P:mRNA transport"/>
    <property type="evidence" value="ECO:0007669"/>
    <property type="project" value="UniProtKB-KW"/>
</dbReference>
<dbReference type="GO" id="GO:0048025">
    <property type="term" value="P:negative regulation of mRNA splicing, via spliceosome"/>
    <property type="evidence" value="ECO:0000250"/>
    <property type="project" value="UniProtKB"/>
</dbReference>
<dbReference type="GO" id="GO:0008380">
    <property type="term" value="P:RNA splicing"/>
    <property type="evidence" value="ECO:0007669"/>
    <property type="project" value="UniProtKB-KW"/>
</dbReference>
<dbReference type="CDD" id="cd12646">
    <property type="entry name" value="RRM_SRSF7"/>
    <property type="match status" value="1"/>
</dbReference>
<dbReference type="FunFam" id="3.30.70.330:FF:000078">
    <property type="entry name" value="serine/arginine-rich splicing factor 7 isoform X1"/>
    <property type="match status" value="1"/>
</dbReference>
<dbReference type="FunFam" id="4.10.60.10:FF:000027">
    <property type="entry name" value="serine/arginine-rich splicing factor 7 isoform X1"/>
    <property type="match status" value="1"/>
</dbReference>
<dbReference type="Gene3D" id="3.30.70.330">
    <property type="match status" value="1"/>
</dbReference>
<dbReference type="Gene3D" id="4.10.60.10">
    <property type="entry name" value="Zinc finger, CCHC-type"/>
    <property type="match status" value="1"/>
</dbReference>
<dbReference type="InterPro" id="IPR012677">
    <property type="entry name" value="Nucleotide-bd_a/b_plait_sf"/>
</dbReference>
<dbReference type="InterPro" id="IPR035979">
    <property type="entry name" value="RBD_domain_sf"/>
</dbReference>
<dbReference type="InterPro" id="IPR000504">
    <property type="entry name" value="RRM_dom"/>
</dbReference>
<dbReference type="InterPro" id="IPR034651">
    <property type="entry name" value="SRSF7_RRM"/>
</dbReference>
<dbReference type="InterPro" id="IPR001878">
    <property type="entry name" value="Znf_CCHC"/>
</dbReference>
<dbReference type="InterPro" id="IPR036875">
    <property type="entry name" value="Znf_CCHC_sf"/>
</dbReference>
<dbReference type="PANTHER" id="PTHR48038">
    <property type="entry name" value="RIBONUCLEOPROTEIN RB97D"/>
    <property type="match status" value="1"/>
</dbReference>
<dbReference type="PANTHER" id="PTHR48038:SF3">
    <property type="entry name" value="SPLICING FACTOR, ARGININE_SERINE-RICH 1-RELATED"/>
    <property type="match status" value="1"/>
</dbReference>
<dbReference type="Pfam" id="PF00076">
    <property type="entry name" value="RRM_1"/>
    <property type="match status" value="1"/>
</dbReference>
<dbReference type="SMART" id="SM00360">
    <property type="entry name" value="RRM"/>
    <property type="match status" value="1"/>
</dbReference>
<dbReference type="SUPFAM" id="SSF57756">
    <property type="entry name" value="Retrovirus zinc finger-like domains"/>
    <property type="match status" value="1"/>
</dbReference>
<dbReference type="SUPFAM" id="SSF54928">
    <property type="entry name" value="RNA-binding domain, RBD"/>
    <property type="match status" value="1"/>
</dbReference>
<dbReference type="PROSITE" id="PS50102">
    <property type="entry name" value="RRM"/>
    <property type="match status" value="1"/>
</dbReference>
<dbReference type="PROSITE" id="PS50158">
    <property type="entry name" value="ZF_CCHC"/>
    <property type="match status" value="1"/>
</dbReference>
<protein>
    <recommendedName>
        <fullName>Serine/arginine-rich splicing factor 7</fullName>
    </recommendedName>
    <alternativeName>
        <fullName>Splicing factor, arginine/serine-rich 7</fullName>
    </alternativeName>
</protein>
<feature type="chain" id="PRO_0000081933" description="Serine/arginine-rich splicing factor 7">
    <location>
        <begin position="1"/>
        <end position="267"/>
    </location>
</feature>
<feature type="domain" description="RRM" evidence="4">
    <location>
        <begin position="40"/>
        <end position="113"/>
    </location>
</feature>
<feature type="repeat" description="1">
    <location>
        <begin position="182"/>
        <end position="189"/>
    </location>
</feature>
<feature type="repeat" description="2">
    <location>
        <begin position="190"/>
        <end position="197"/>
    </location>
</feature>
<feature type="repeat" description="3">
    <location>
        <begin position="198"/>
        <end position="205"/>
    </location>
</feature>
<feature type="repeat" description="4">
    <location>
        <begin position="206"/>
        <end position="213"/>
    </location>
</feature>
<feature type="repeat" description="5; approximate">
    <location>
        <begin position="240"/>
        <end position="247"/>
    </location>
</feature>
<feature type="repeat" description="6; approximate">
    <location>
        <begin position="248"/>
        <end position="255"/>
    </location>
</feature>
<feature type="zinc finger region" description="CCHC-type" evidence="3">
    <location>
        <begin position="133"/>
        <end position="150"/>
    </location>
</feature>
<feature type="region of interest" description="Sufficient for interaction with NXF1" evidence="1">
    <location>
        <begin position="110"/>
        <end position="127"/>
    </location>
</feature>
<feature type="region of interest" description="Disordered" evidence="5">
    <location>
        <begin position="152"/>
        <end position="267"/>
    </location>
</feature>
<feature type="region of interest" description="6 X 8 AA repeats of R-R-S-R-S-X-S-X">
    <location>
        <begin position="182"/>
        <end position="255"/>
    </location>
</feature>
<feature type="compositionally biased region" description="Basic residues" evidence="5">
    <location>
        <begin position="152"/>
        <end position="209"/>
    </location>
</feature>
<feature type="compositionally biased region" description="Basic residues" evidence="5">
    <location>
        <begin position="223"/>
        <end position="251"/>
    </location>
</feature>
<feature type="modified residue" description="N6-acetyllysine; alternate" evidence="11">
    <location>
        <position position="53"/>
    </location>
</feature>
<feature type="modified residue" description="Phosphoserine" evidence="2">
    <location>
        <position position="61"/>
    </location>
</feature>
<feature type="modified residue" description="Phosphoserine" evidence="2">
    <location>
        <position position="192"/>
    </location>
</feature>
<feature type="modified residue" description="Phosphoserine" evidence="2">
    <location>
        <position position="194"/>
    </location>
</feature>
<feature type="modified residue" description="Phosphoserine" evidence="2">
    <location>
        <position position="196"/>
    </location>
</feature>
<feature type="modified residue" description="Phosphoserine" evidence="10">
    <location>
        <position position="210"/>
    </location>
</feature>
<feature type="modified residue" description="Phosphoserine" evidence="10">
    <location>
        <position position="212"/>
    </location>
</feature>
<feature type="modified residue" description="Phosphoserine" evidence="2">
    <location>
        <position position="221"/>
    </location>
</feature>
<feature type="modified residue" description="Phosphoserine" evidence="2">
    <location>
        <position position="223"/>
    </location>
</feature>
<feature type="modified residue" description="Phosphoserine" evidence="2">
    <location>
        <position position="225"/>
    </location>
</feature>
<feature type="modified residue" description="Phosphoserine" evidence="2">
    <location>
        <position position="260"/>
    </location>
</feature>
<feature type="modified residue" description="Phosphoserine" evidence="2">
    <location>
        <position position="262"/>
    </location>
</feature>
<feature type="cross-link" description="Glycyl lysine isopeptide (Lys-Gly) (interchain with G-Cter in SUMO2); alternate" evidence="2">
    <location>
        <position position="53"/>
    </location>
</feature>
<feature type="splice variant" id="VSP_013654" description="In isoform 2, isoform 3 and isoform 4." evidence="7 8">
    <original>MRSSARGRPLQAATAFFLSLFFFLRRFERGFWLWGGDS</original>
    <variation>MSRYGRYGG</variation>
    <location>
        <begin position="1"/>
        <end position="38"/>
    </location>
</feature>
<feature type="splice variant" id="VSP_013655" description="In isoform 3." evidence="7 8">
    <original>SRSRSHSRSRGRRYSRSRSRSRGRRSRS</original>
    <variation>YLINEGMVGILVNQSNSFISKAETSVFL</variation>
    <location>
        <begin position="159"/>
        <end position="186"/>
    </location>
</feature>
<feature type="splice variant" id="VSP_013656" description="In isoform 3." evidence="7 8">
    <location>
        <begin position="187"/>
        <end position="267"/>
    </location>
</feature>
<feature type="splice variant" id="VSP_013657" description="In isoform 4." evidence="7">
    <location>
        <begin position="238"/>
        <end position="249"/>
    </location>
</feature>
<feature type="sequence conflict" description="In Ref. 1; BAC28058." evidence="9" ref="1">
    <original>R</original>
    <variation>T</variation>
    <location>
        <position position="155"/>
    </location>
</feature>
<feature type="sequence conflict" description="In Ref. 2; AAH14857." evidence="9" ref="2">
    <original>SRSGS</original>
    <variation>FRFGF</variation>
    <location>
        <begin position="208"/>
        <end position="212"/>
    </location>
</feature>
<feature type="sequence conflict" description="In Ref. 1; BAC38650." evidence="9" ref="1">
    <location>
        <begin position="218"/>
        <end position="220"/>
    </location>
</feature>
<feature type="sequence conflict" description="In Ref. 2; AAH14857." evidence="9" ref="2">
    <original>S</original>
    <variation>F</variation>
    <location>
        <position position="231"/>
    </location>
</feature>
<feature type="sequence conflict" description="In Ref. 2; AAH14857." evidence="9" ref="2">
    <original>R</original>
    <variation>C</variation>
    <location>
        <position position="251"/>
    </location>
</feature>
<feature type="sequence conflict" description="In Ref. 2; AAH14857." evidence="9" ref="2">
    <original>H</original>
    <variation>P</variation>
    <location>
        <position position="258"/>
    </location>
</feature>
<sequence>MRSSARGRPLQAATAFFLSLFFFLRRFERGFWLWGGDSETKVYVGNLGTGAGKGELERAFSYYGPLRTVWIARNPPGFAFVEFEDPRDAEDAVRGLDGKVICGSRVRVELSTGMPRRSRFDRPPARRPFDPNDRCYECGEKGHYAYDCHRYSRRRRSRSRSRSHSRSRGRRYSRSRSRSRGRRSRSASPRRSRSVSLRRSRSASLRRSRSGSIIGSRYFQSRSRSRSRSRSISRPRSSRSKSRSPSPKRSRSPSGSPHRSASPERMD</sequence>
<gene>
    <name type="primary">Srsf7</name>
    <name type="synonym">Sfrs7</name>
</gene>
<organism>
    <name type="scientific">Mus musculus</name>
    <name type="common">Mouse</name>
    <dbReference type="NCBI Taxonomy" id="10090"/>
    <lineage>
        <taxon>Eukaryota</taxon>
        <taxon>Metazoa</taxon>
        <taxon>Chordata</taxon>
        <taxon>Craniata</taxon>
        <taxon>Vertebrata</taxon>
        <taxon>Euteleostomi</taxon>
        <taxon>Mammalia</taxon>
        <taxon>Eutheria</taxon>
        <taxon>Euarchontoglires</taxon>
        <taxon>Glires</taxon>
        <taxon>Rodentia</taxon>
        <taxon>Myomorpha</taxon>
        <taxon>Muroidea</taxon>
        <taxon>Muridae</taxon>
        <taxon>Murinae</taxon>
        <taxon>Mus</taxon>
        <taxon>Mus</taxon>
    </lineage>
</organism>
<reference key="1">
    <citation type="journal article" date="2005" name="Science">
        <title>The transcriptional landscape of the mammalian genome.</title>
        <authorList>
            <person name="Carninci P."/>
            <person name="Kasukawa T."/>
            <person name="Katayama S."/>
            <person name="Gough J."/>
            <person name="Frith M.C."/>
            <person name="Maeda N."/>
            <person name="Oyama R."/>
            <person name="Ravasi T."/>
            <person name="Lenhard B."/>
            <person name="Wells C."/>
            <person name="Kodzius R."/>
            <person name="Shimokawa K."/>
            <person name="Bajic V.B."/>
            <person name="Brenner S.E."/>
            <person name="Batalov S."/>
            <person name="Forrest A.R."/>
            <person name="Zavolan M."/>
            <person name="Davis M.J."/>
            <person name="Wilming L.G."/>
            <person name="Aidinis V."/>
            <person name="Allen J.E."/>
            <person name="Ambesi-Impiombato A."/>
            <person name="Apweiler R."/>
            <person name="Aturaliya R.N."/>
            <person name="Bailey T.L."/>
            <person name="Bansal M."/>
            <person name="Baxter L."/>
            <person name="Beisel K.W."/>
            <person name="Bersano T."/>
            <person name="Bono H."/>
            <person name="Chalk A.M."/>
            <person name="Chiu K.P."/>
            <person name="Choudhary V."/>
            <person name="Christoffels A."/>
            <person name="Clutterbuck D.R."/>
            <person name="Crowe M.L."/>
            <person name="Dalla E."/>
            <person name="Dalrymple B.P."/>
            <person name="de Bono B."/>
            <person name="Della Gatta G."/>
            <person name="di Bernardo D."/>
            <person name="Down T."/>
            <person name="Engstrom P."/>
            <person name="Fagiolini M."/>
            <person name="Faulkner G."/>
            <person name="Fletcher C.F."/>
            <person name="Fukushima T."/>
            <person name="Furuno M."/>
            <person name="Futaki S."/>
            <person name="Gariboldi M."/>
            <person name="Georgii-Hemming P."/>
            <person name="Gingeras T.R."/>
            <person name="Gojobori T."/>
            <person name="Green R.E."/>
            <person name="Gustincich S."/>
            <person name="Harbers M."/>
            <person name="Hayashi Y."/>
            <person name="Hensch T.K."/>
            <person name="Hirokawa N."/>
            <person name="Hill D."/>
            <person name="Huminiecki L."/>
            <person name="Iacono M."/>
            <person name="Ikeo K."/>
            <person name="Iwama A."/>
            <person name="Ishikawa T."/>
            <person name="Jakt M."/>
            <person name="Kanapin A."/>
            <person name="Katoh M."/>
            <person name="Kawasawa Y."/>
            <person name="Kelso J."/>
            <person name="Kitamura H."/>
            <person name="Kitano H."/>
            <person name="Kollias G."/>
            <person name="Krishnan S.P."/>
            <person name="Kruger A."/>
            <person name="Kummerfeld S.K."/>
            <person name="Kurochkin I.V."/>
            <person name="Lareau L.F."/>
            <person name="Lazarevic D."/>
            <person name="Lipovich L."/>
            <person name="Liu J."/>
            <person name="Liuni S."/>
            <person name="McWilliam S."/>
            <person name="Madan Babu M."/>
            <person name="Madera M."/>
            <person name="Marchionni L."/>
            <person name="Matsuda H."/>
            <person name="Matsuzawa S."/>
            <person name="Miki H."/>
            <person name="Mignone F."/>
            <person name="Miyake S."/>
            <person name="Morris K."/>
            <person name="Mottagui-Tabar S."/>
            <person name="Mulder N."/>
            <person name="Nakano N."/>
            <person name="Nakauchi H."/>
            <person name="Ng P."/>
            <person name="Nilsson R."/>
            <person name="Nishiguchi S."/>
            <person name="Nishikawa S."/>
            <person name="Nori F."/>
            <person name="Ohara O."/>
            <person name="Okazaki Y."/>
            <person name="Orlando V."/>
            <person name="Pang K.C."/>
            <person name="Pavan W.J."/>
            <person name="Pavesi G."/>
            <person name="Pesole G."/>
            <person name="Petrovsky N."/>
            <person name="Piazza S."/>
            <person name="Reed J."/>
            <person name="Reid J.F."/>
            <person name="Ring B.Z."/>
            <person name="Ringwald M."/>
            <person name="Rost B."/>
            <person name="Ruan Y."/>
            <person name="Salzberg S.L."/>
            <person name="Sandelin A."/>
            <person name="Schneider C."/>
            <person name="Schoenbach C."/>
            <person name="Sekiguchi K."/>
            <person name="Semple C.A."/>
            <person name="Seno S."/>
            <person name="Sessa L."/>
            <person name="Sheng Y."/>
            <person name="Shibata Y."/>
            <person name="Shimada H."/>
            <person name="Shimada K."/>
            <person name="Silva D."/>
            <person name="Sinclair B."/>
            <person name="Sperling S."/>
            <person name="Stupka E."/>
            <person name="Sugiura K."/>
            <person name="Sultana R."/>
            <person name="Takenaka Y."/>
            <person name="Taki K."/>
            <person name="Tammoja K."/>
            <person name="Tan S.L."/>
            <person name="Tang S."/>
            <person name="Taylor M.S."/>
            <person name="Tegner J."/>
            <person name="Teichmann S.A."/>
            <person name="Ueda H.R."/>
            <person name="van Nimwegen E."/>
            <person name="Verardo R."/>
            <person name="Wei C.L."/>
            <person name="Yagi K."/>
            <person name="Yamanishi H."/>
            <person name="Zabarovsky E."/>
            <person name="Zhu S."/>
            <person name="Zimmer A."/>
            <person name="Hide W."/>
            <person name="Bult C."/>
            <person name="Grimmond S.M."/>
            <person name="Teasdale R.D."/>
            <person name="Liu E.T."/>
            <person name="Brusic V."/>
            <person name="Quackenbush J."/>
            <person name="Wahlestedt C."/>
            <person name="Mattick J.S."/>
            <person name="Hume D.A."/>
            <person name="Kai C."/>
            <person name="Sasaki D."/>
            <person name="Tomaru Y."/>
            <person name="Fukuda S."/>
            <person name="Kanamori-Katayama M."/>
            <person name="Suzuki M."/>
            <person name="Aoki J."/>
            <person name="Arakawa T."/>
            <person name="Iida J."/>
            <person name="Imamura K."/>
            <person name="Itoh M."/>
            <person name="Kato T."/>
            <person name="Kawaji H."/>
            <person name="Kawagashira N."/>
            <person name="Kawashima T."/>
            <person name="Kojima M."/>
            <person name="Kondo S."/>
            <person name="Konno H."/>
            <person name="Nakano K."/>
            <person name="Ninomiya N."/>
            <person name="Nishio T."/>
            <person name="Okada M."/>
            <person name="Plessy C."/>
            <person name="Shibata K."/>
            <person name="Shiraki T."/>
            <person name="Suzuki S."/>
            <person name="Tagami M."/>
            <person name="Waki K."/>
            <person name="Watahiki A."/>
            <person name="Okamura-Oho Y."/>
            <person name="Suzuki H."/>
            <person name="Kawai J."/>
            <person name="Hayashizaki Y."/>
        </authorList>
    </citation>
    <scope>NUCLEOTIDE SEQUENCE [LARGE SCALE MRNA] (ISOFORMS 1; 2 AND 3)</scope>
    <source>
        <strain>C57BL/6J</strain>
        <tissue>Corpora quadrigemina</tissue>
        <tissue>Wolffian duct</tissue>
    </source>
</reference>
<reference key="2">
    <citation type="journal article" date="2004" name="Genome Res.">
        <title>The status, quality, and expansion of the NIH full-length cDNA project: the Mammalian Gene Collection (MGC).</title>
        <authorList>
            <consortium name="The MGC Project Team"/>
        </authorList>
    </citation>
    <scope>NUCLEOTIDE SEQUENCE [LARGE SCALE MRNA] (ISOFORMS 2; 3 AND 4)</scope>
    <source>
        <strain>FVB/N</strain>
        <tissue>Mammary tumor</tissue>
    </source>
</reference>
<reference key="3">
    <citation type="journal article" date="2010" name="Cell">
        <title>A tissue-specific atlas of mouse protein phosphorylation and expression.</title>
        <authorList>
            <person name="Huttlin E.L."/>
            <person name="Jedrychowski M.P."/>
            <person name="Elias J.E."/>
            <person name="Goswami T."/>
            <person name="Rad R."/>
            <person name="Beausoleil S.A."/>
            <person name="Villen J."/>
            <person name="Haas W."/>
            <person name="Sowa M.E."/>
            <person name="Gygi S.P."/>
        </authorList>
    </citation>
    <scope>PHOSPHORYLATION [LARGE SCALE ANALYSIS] AT SER-210 AND SER-212</scope>
    <scope>IDENTIFICATION BY MASS SPECTROMETRY [LARGE SCALE ANALYSIS]</scope>
    <source>
        <tissue>Testis</tissue>
    </source>
</reference>
<reference key="4">
    <citation type="journal article" date="2013" name="Mol. Cell">
        <title>SIRT5-mediated lysine desuccinylation impacts diverse metabolic pathways.</title>
        <authorList>
            <person name="Park J."/>
            <person name="Chen Y."/>
            <person name="Tishkoff D.X."/>
            <person name="Peng C."/>
            <person name="Tan M."/>
            <person name="Dai L."/>
            <person name="Xie Z."/>
            <person name="Zhang Y."/>
            <person name="Zwaans B.M."/>
            <person name="Skinner M.E."/>
            <person name="Lombard D.B."/>
            <person name="Zhao Y."/>
        </authorList>
    </citation>
    <scope>ACETYLATION [LARGE SCALE ANALYSIS] AT LYS-53</scope>
    <scope>IDENTIFICATION BY MASS SPECTROMETRY [LARGE SCALE ANALYSIS]</scope>
    <source>
        <tissue>Embryonic fibroblast</tissue>
    </source>
</reference>
<reference key="5">
    <citation type="journal article" date="2018" name="PLoS Genet.">
        <title>Nuclear m6A reader YTHDC1 regulates alternative polyadenylation and splicing during mouse oocyte development.</title>
        <authorList>
            <person name="Kasowitz S.D."/>
            <person name="Ma J."/>
            <person name="Anderson S.J."/>
            <person name="Leu N.A."/>
            <person name="Xu Y."/>
            <person name="Gregory B.D."/>
            <person name="Schultz R.M."/>
            <person name="Wang P.J."/>
        </authorList>
    </citation>
    <scope>INTERACTION WITH YTHDC1</scope>
</reference>
<name>SRSF7_MOUSE</name>
<evidence type="ECO:0000250" key="1"/>
<evidence type="ECO:0000250" key="2">
    <source>
        <dbReference type="UniProtKB" id="Q16629"/>
    </source>
</evidence>
<evidence type="ECO:0000255" key="3">
    <source>
        <dbReference type="PROSITE-ProRule" id="PRU00047"/>
    </source>
</evidence>
<evidence type="ECO:0000255" key="4">
    <source>
        <dbReference type="PROSITE-ProRule" id="PRU00176"/>
    </source>
</evidence>
<evidence type="ECO:0000256" key="5">
    <source>
        <dbReference type="SAM" id="MobiDB-lite"/>
    </source>
</evidence>
<evidence type="ECO:0000269" key="6">
    <source>
    </source>
</evidence>
<evidence type="ECO:0000303" key="7">
    <source>
    </source>
</evidence>
<evidence type="ECO:0000303" key="8">
    <source>
    </source>
</evidence>
<evidence type="ECO:0000305" key="9"/>
<evidence type="ECO:0007744" key="10">
    <source>
    </source>
</evidence>
<evidence type="ECO:0007744" key="11">
    <source>
    </source>
</evidence>